<sequence length="159" mass="18070">MQCPTCQNTDSRVLESRSADSGKSVRRRRECLNCSFRFTTYERVESMPVSVLKKDGSRELFDKQKLFTGISRACEKTNFSSEAIINFVDGIESQIVQDTNKDIKSSQIGELILKNLRKENEVAYIRYASVYRKFNGVKDFISTLESLKGSSKNQLASIS</sequence>
<dbReference type="EMBL" id="CP000576">
    <property type="protein sequence ID" value="ABO16961.1"/>
    <property type="molecule type" value="Genomic_DNA"/>
</dbReference>
<dbReference type="RefSeq" id="WP_011862350.1">
    <property type="nucleotide sequence ID" value="NC_009091.1"/>
</dbReference>
<dbReference type="SMR" id="A3PB36"/>
<dbReference type="STRING" id="167546.P9301_03381"/>
<dbReference type="KEGG" id="pmg:P9301_03381"/>
<dbReference type="eggNOG" id="COG1327">
    <property type="taxonomic scope" value="Bacteria"/>
</dbReference>
<dbReference type="HOGENOM" id="CLU_108412_0_0_3"/>
<dbReference type="OrthoDB" id="9807461at2"/>
<dbReference type="Proteomes" id="UP000001430">
    <property type="component" value="Chromosome"/>
</dbReference>
<dbReference type="GO" id="GO:0005524">
    <property type="term" value="F:ATP binding"/>
    <property type="evidence" value="ECO:0007669"/>
    <property type="project" value="UniProtKB-KW"/>
</dbReference>
<dbReference type="GO" id="GO:0003677">
    <property type="term" value="F:DNA binding"/>
    <property type="evidence" value="ECO:0007669"/>
    <property type="project" value="UniProtKB-KW"/>
</dbReference>
<dbReference type="GO" id="GO:0008270">
    <property type="term" value="F:zinc ion binding"/>
    <property type="evidence" value="ECO:0007669"/>
    <property type="project" value="UniProtKB-UniRule"/>
</dbReference>
<dbReference type="GO" id="GO:0045892">
    <property type="term" value="P:negative regulation of DNA-templated transcription"/>
    <property type="evidence" value="ECO:0007669"/>
    <property type="project" value="UniProtKB-UniRule"/>
</dbReference>
<dbReference type="HAMAP" id="MF_00440">
    <property type="entry name" value="NrdR"/>
    <property type="match status" value="1"/>
</dbReference>
<dbReference type="InterPro" id="IPR005144">
    <property type="entry name" value="ATP-cone_dom"/>
</dbReference>
<dbReference type="InterPro" id="IPR055173">
    <property type="entry name" value="NrdR-like_N"/>
</dbReference>
<dbReference type="InterPro" id="IPR003796">
    <property type="entry name" value="RNR_NrdR-like"/>
</dbReference>
<dbReference type="NCBIfam" id="TIGR00244">
    <property type="entry name" value="transcriptional regulator NrdR"/>
    <property type="match status" value="1"/>
</dbReference>
<dbReference type="PANTHER" id="PTHR30455">
    <property type="entry name" value="TRANSCRIPTIONAL REPRESSOR NRDR"/>
    <property type="match status" value="1"/>
</dbReference>
<dbReference type="PANTHER" id="PTHR30455:SF2">
    <property type="entry name" value="TRANSCRIPTIONAL REPRESSOR NRDR"/>
    <property type="match status" value="1"/>
</dbReference>
<dbReference type="Pfam" id="PF03477">
    <property type="entry name" value="ATP-cone"/>
    <property type="match status" value="1"/>
</dbReference>
<dbReference type="Pfam" id="PF22811">
    <property type="entry name" value="Zn_ribbon_NrdR"/>
    <property type="match status" value="1"/>
</dbReference>
<dbReference type="PROSITE" id="PS51161">
    <property type="entry name" value="ATP_CONE"/>
    <property type="match status" value="1"/>
</dbReference>
<comment type="function">
    <text evidence="1">Negatively regulates transcription of bacterial ribonucleotide reductase nrd genes and operons by binding to NrdR-boxes.</text>
</comment>
<comment type="cofactor">
    <cofactor evidence="1">
        <name>Zn(2+)</name>
        <dbReference type="ChEBI" id="CHEBI:29105"/>
    </cofactor>
    <text evidence="1">Binds 1 zinc ion.</text>
</comment>
<comment type="similarity">
    <text evidence="1">Belongs to the NrdR family.</text>
</comment>
<organism>
    <name type="scientific">Prochlorococcus marinus (strain MIT 9301)</name>
    <dbReference type="NCBI Taxonomy" id="167546"/>
    <lineage>
        <taxon>Bacteria</taxon>
        <taxon>Bacillati</taxon>
        <taxon>Cyanobacteriota</taxon>
        <taxon>Cyanophyceae</taxon>
        <taxon>Synechococcales</taxon>
        <taxon>Prochlorococcaceae</taxon>
        <taxon>Prochlorococcus</taxon>
    </lineage>
</organism>
<feature type="chain" id="PRO_1000080795" description="Transcriptional repressor NrdR">
    <location>
        <begin position="1"/>
        <end position="159"/>
    </location>
</feature>
<feature type="domain" description="ATP-cone" evidence="1">
    <location>
        <begin position="49"/>
        <end position="139"/>
    </location>
</feature>
<feature type="zinc finger region" evidence="1">
    <location>
        <begin position="3"/>
        <end position="34"/>
    </location>
</feature>
<feature type="region of interest" description="Disordered" evidence="2">
    <location>
        <begin position="1"/>
        <end position="21"/>
    </location>
</feature>
<feature type="compositionally biased region" description="Polar residues" evidence="2">
    <location>
        <begin position="1"/>
        <end position="11"/>
    </location>
</feature>
<name>NRDR_PROM0</name>
<reference key="1">
    <citation type="journal article" date="2007" name="PLoS Genet.">
        <title>Patterns and implications of gene gain and loss in the evolution of Prochlorococcus.</title>
        <authorList>
            <person name="Kettler G.C."/>
            <person name="Martiny A.C."/>
            <person name="Huang K."/>
            <person name="Zucker J."/>
            <person name="Coleman M.L."/>
            <person name="Rodrigue S."/>
            <person name="Chen F."/>
            <person name="Lapidus A."/>
            <person name="Ferriera S."/>
            <person name="Johnson J."/>
            <person name="Steglich C."/>
            <person name="Church G.M."/>
            <person name="Richardson P."/>
            <person name="Chisholm S.W."/>
        </authorList>
    </citation>
    <scope>NUCLEOTIDE SEQUENCE [LARGE SCALE GENOMIC DNA]</scope>
    <source>
        <strain>MIT 9301</strain>
    </source>
</reference>
<proteinExistence type="inferred from homology"/>
<evidence type="ECO:0000255" key="1">
    <source>
        <dbReference type="HAMAP-Rule" id="MF_00440"/>
    </source>
</evidence>
<evidence type="ECO:0000256" key="2">
    <source>
        <dbReference type="SAM" id="MobiDB-lite"/>
    </source>
</evidence>
<protein>
    <recommendedName>
        <fullName evidence="1">Transcriptional repressor NrdR</fullName>
    </recommendedName>
</protein>
<accession>A3PB36</accession>
<gene>
    <name evidence="1" type="primary">nrdR</name>
    <name type="ordered locus">P9301_03381</name>
</gene>
<keyword id="KW-0067">ATP-binding</keyword>
<keyword id="KW-0238">DNA-binding</keyword>
<keyword id="KW-0479">Metal-binding</keyword>
<keyword id="KW-0547">Nucleotide-binding</keyword>
<keyword id="KW-1185">Reference proteome</keyword>
<keyword id="KW-0678">Repressor</keyword>
<keyword id="KW-0804">Transcription</keyword>
<keyword id="KW-0805">Transcription regulation</keyword>
<keyword id="KW-0862">Zinc</keyword>
<keyword id="KW-0863">Zinc-finger</keyword>